<sequence length="399" mass="42415">MEKHLIALSVAALLAGAAPASADIKMGSLYPFSGPLALLGDESARGLEIAVEEINAKGGVQGEKIVLVRGDAVDNNQAIGEARRLISVENVAGIFGSFSSGRAVAASQVSELAGLPYFELGAVADEITDRGLENVYRANPYARDFAQMIVEMLQKKIAPKLGRDSKDLKIAVIYEDSSYGTSVAKHEETFLKEAGLNMVLSQSYPGNTVDMSSLVLDLKSAGADVVLQTSYQSDSVLFLQQANEGGYKPSAIVGAGGGYSLQPTADAVGHDVIEAAYDVDFTQFAVNTSFTPGLEEFVEAYKKKYGETPRSGHSLTNYVGAKVILEALNKVKGFDAAAVKQALSAVDIEAGKNAMGYGFKFDQNNQNERASMMGMQWQDGKLVTVYPDAAAISEIRLPQ</sequence>
<evidence type="ECO:0000255" key="1"/>
<evidence type="ECO:0000305" key="2"/>
<accession>Q8YBN1</accession>
<comment type="function">
    <text evidence="2">Component of an amino-acid transport system.</text>
</comment>
<comment type="similarity">
    <text evidence="2">Belongs to the leucine-binding protein family.</text>
</comment>
<comment type="sequence caution" evidence="2">
    <conflict type="erroneous initiation">
        <sequence resource="EMBL-CDS" id="AAL54110"/>
    </conflict>
</comment>
<dbReference type="EMBL" id="AE008918">
    <property type="protein sequence ID" value="AAL54110.1"/>
    <property type="status" value="ALT_INIT"/>
    <property type="molecule type" value="Genomic_DNA"/>
</dbReference>
<dbReference type="PIR" id="AC3618">
    <property type="entry name" value="AC3618"/>
</dbReference>
<dbReference type="RefSeq" id="WP_004681727.1">
    <property type="nucleotide sequence ID" value="NC_003318.1"/>
</dbReference>
<dbReference type="SMR" id="Q8YBN1"/>
<dbReference type="GeneID" id="29595924"/>
<dbReference type="KEGG" id="bme:BMEII0868"/>
<dbReference type="KEGG" id="bmel:DK63_2380"/>
<dbReference type="PATRIC" id="fig|224914.52.peg.2494"/>
<dbReference type="eggNOG" id="COG0683">
    <property type="taxonomic scope" value="Bacteria"/>
</dbReference>
<dbReference type="PhylomeDB" id="Q8YBN1"/>
<dbReference type="Proteomes" id="UP000000419">
    <property type="component" value="Chromosome II"/>
</dbReference>
<dbReference type="GO" id="GO:0006865">
    <property type="term" value="P:amino acid transport"/>
    <property type="evidence" value="ECO:0007669"/>
    <property type="project" value="UniProtKB-KW"/>
</dbReference>
<dbReference type="CDD" id="cd06340">
    <property type="entry name" value="PBP1_ABC_ligand_binding-like"/>
    <property type="match status" value="1"/>
</dbReference>
<dbReference type="Gene3D" id="3.40.50.2300">
    <property type="match status" value="2"/>
</dbReference>
<dbReference type="InterPro" id="IPR051010">
    <property type="entry name" value="BCAA_transport"/>
</dbReference>
<dbReference type="InterPro" id="IPR028081">
    <property type="entry name" value="Leu-bd"/>
</dbReference>
<dbReference type="InterPro" id="IPR000709">
    <property type="entry name" value="Leu_Ile_Val-bd"/>
</dbReference>
<dbReference type="InterPro" id="IPR028082">
    <property type="entry name" value="Peripla_BP_I"/>
</dbReference>
<dbReference type="PANTHER" id="PTHR30483:SF37">
    <property type="entry name" value="ABC TRANSPORTER SUBSTRATE-BINDING PROTEIN"/>
    <property type="match status" value="1"/>
</dbReference>
<dbReference type="PANTHER" id="PTHR30483">
    <property type="entry name" value="LEUCINE-SPECIFIC-BINDING PROTEIN"/>
    <property type="match status" value="1"/>
</dbReference>
<dbReference type="Pfam" id="PF13458">
    <property type="entry name" value="Peripla_BP_6"/>
    <property type="match status" value="1"/>
</dbReference>
<dbReference type="PRINTS" id="PR00337">
    <property type="entry name" value="LEUILEVALBP"/>
</dbReference>
<dbReference type="SUPFAM" id="SSF53822">
    <property type="entry name" value="Periplasmic binding protein-like I"/>
    <property type="match status" value="1"/>
</dbReference>
<name>LIVB7_BRUME</name>
<organism>
    <name type="scientific">Brucella melitensis biotype 1 (strain ATCC 23456 / CCUG 17765 / NCTC 10094 / 16M)</name>
    <dbReference type="NCBI Taxonomy" id="224914"/>
    <lineage>
        <taxon>Bacteria</taxon>
        <taxon>Pseudomonadati</taxon>
        <taxon>Pseudomonadota</taxon>
        <taxon>Alphaproteobacteria</taxon>
        <taxon>Hyphomicrobiales</taxon>
        <taxon>Brucellaceae</taxon>
        <taxon>Brucella/Ochrobactrum group</taxon>
        <taxon>Brucella</taxon>
    </lineage>
</organism>
<gene>
    <name type="ordered locus">BMEII0868</name>
</gene>
<feature type="signal peptide" evidence="1">
    <location>
        <begin position="1"/>
        <end position="22"/>
    </location>
</feature>
<feature type="chain" id="PRO_0000285743" description="Leu/Ile/Val-binding protein homolog 7">
    <location>
        <begin position="23"/>
        <end position="399"/>
    </location>
</feature>
<reference key="1">
    <citation type="journal article" date="2002" name="Proc. Natl. Acad. Sci. U.S.A.">
        <title>The genome sequence of the facultative intracellular pathogen Brucella melitensis.</title>
        <authorList>
            <person name="DelVecchio V.G."/>
            <person name="Kapatral V."/>
            <person name="Redkar R.J."/>
            <person name="Patra G."/>
            <person name="Mujer C."/>
            <person name="Los T."/>
            <person name="Ivanova N."/>
            <person name="Anderson I."/>
            <person name="Bhattacharyya A."/>
            <person name="Lykidis A."/>
            <person name="Reznik G."/>
            <person name="Jablonski L."/>
            <person name="Larsen N."/>
            <person name="D'Souza M."/>
            <person name="Bernal A."/>
            <person name="Mazur M."/>
            <person name="Goltsman E."/>
            <person name="Selkov E."/>
            <person name="Elzer P.H."/>
            <person name="Hagius S."/>
            <person name="O'Callaghan D."/>
            <person name="Letesson J.-J."/>
            <person name="Haselkorn R."/>
            <person name="Kyrpides N.C."/>
            <person name="Overbeek R."/>
        </authorList>
    </citation>
    <scope>NUCLEOTIDE SEQUENCE [LARGE SCALE GENOMIC DNA]</scope>
    <source>
        <strain>ATCC 23456 / CCUG 17765 / NCTC 10094 / 16M</strain>
    </source>
</reference>
<keyword id="KW-0029">Amino-acid transport</keyword>
<keyword id="KW-0732">Signal</keyword>
<keyword id="KW-0813">Transport</keyword>
<protein>
    <recommendedName>
        <fullName>Leu/Ile/Val-binding protein homolog 7</fullName>
    </recommendedName>
</protein>
<proteinExistence type="inferred from homology"/>